<keyword id="KW-1015">Disulfide bond</keyword>
<keyword id="KW-0646">Protease inhibitor</keyword>
<keyword id="KW-0964">Secreted</keyword>
<keyword id="KW-0722">Serine protease inhibitor</keyword>
<keyword id="KW-0732">Signal</keyword>
<comment type="function">
    <text evidence="2">Serine protease inhibitor that inhibits trypsin at a molar ratio of 1:1.</text>
</comment>
<comment type="subcellular location">
    <subcellularLocation>
        <location evidence="8">Secreted</location>
    </subcellularLocation>
</comment>
<comment type="tissue specificity">
    <text evidence="8">Expressed by the venom gland.</text>
</comment>
<comment type="similarity">
    <text evidence="7">Belongs to the venom Kunitz-type family. 03 (sub-Kunitz) subfamily.</text>
</comment>
<organism>
    <name type="scientific">Cyriopagopus schmidti</name>
    <name type="common">Chinese bird spider</name>
    <name type="synonym">Haplopelma schmidti</name>
    <dbReference type="NCBI Taxonomy" id="29017"/>
    <lineage>
        <taxon>Eukaryota</taxon>
        <taxon>Metazoa</taxon>
        <taxon>Ecdysozoa</taxon>
        <taxon>Arthropoda</taxon>
        <taxon>Chelicerata</taxon>
        <taxon>Arachnida</taxon>
        <taxon>Araneae</taxon>
        <taxon>Mygalomorphae</taxon>
        <taxon>Theraphosidae</taxon>
        <taxon>Cyriopagopus</taxon>
    </lineage>
</organism>
<evidence type="ECO:0000250" key="1"/>
<evidence type="ECO:0000250" key="2">
    <source>
        <dbReference type="UniProtKB" id="P68425"/>
    </source>
</evidence>
<evidence type="ECO:0000255" key="3"/>
<evidence type="ECO:0000255" key="4">
    <source>
        <dbReference type="PROSITE-ProRule" id="PRU00031"/>
    </source>
</evidence>
<evidence type="ECO:0000303" key="5">
    <source>
    </source>
</evidence>
<evidence type="ECO:0000303" key="6">
    <source>
    </source>
</evidence>
<evidence type="ECO:0000305" key="7"/>
<evidence type="ECO:0000305" key="8">
    <source>
    </source>
</evidence>
<evidence type="ECO:0000312" key="9">
    <source>
        <dbReference type="EMBL" id="AHY30313.1"/>
    </source>
</evidence>
<protein>
    <recommendedName>
        <fullName>Kunitz-type U15-theraphotoxin-Hs1a</fullName>
        <shortName>U15-TRTX-Hs1a</shortName>
    </recommendedName>
    <alternativeName>
        <fullName evidence="6">Huwentoxin HW11c22</fullName>
    </alternativeName>
    <alternativeName>
        <fullName evidence="5">Kunitz-type serine protease inhibitor HWTX-XI-IS22</fullName>
    </alternativeName>
</protein>
<sequence>MGTARFLSAVLLLSVPLMVTFPALLSAEYHDGRVDICSLPSDSGDCLRFFEMWYFDGTTCTKFVYGGYGGNDNRFPTEKACMKRCAKA</sequence>
<dbReference type="EMBL" id="KF160302">
    <property type="protein sequence ID" value="AHY30313.1"/>
    <property type="molecule type" value="Genomic_DNA"/>
</dbReference>
<dbReference type="SMR" id="P0DJ80"/>
<dbReference type="ArachnoServer" id="AS000481">
    <property type="toxin name" value="U15-theraphotoxin-Hs1a"/>
</dbReference>
<dbReference type="GO" id="GO:0005576">
    <property type="term" value="C:extracellular region"/>
    <property type="evidence" value="ECO:0007669"/>
    <property type="project" value="UniProtKB-SubCell"/>
</dbReference>
<dbReference type="GO" id="GO:0015459">
    <property type="term" value="F:potassium channel regulator activity"/>
    <property type="evidence" value="ECO:0007669"/>
    <property type="project" value="UniProtKB-KW"/>
</dbReference>
<dbReference type="GO" id="GO:0004867">
    <property type="term" value="F:serine-type endopeptidase inhibitor activity"/>
    <property type="evidence" value="ECO:0007669"/>
    <property type="project" value="UniProtKB-KW"/>
</dbReference>
<dbReference type="GO" id="GO:0090729">
    <property type="term" value="F:toxin activity"/>
    <property type="evidence" value="ECO:0007669"/>
    <property type="project" value="UniProtKB-KW"/>
</dbReference>
<dbReference type="GO" id="GO:0044562">
    <property type="term" value="P:envenomation resulting in negative regulation of voltage-gated potassium channel activity in another organism"/>
    <property type="evidence" value="ECO:0007669"/>
    <property type="project" value="UniProtKB-ARBA"/>
</dbReference>
<dbReference type="CDD" id="cd22598">
    <property type="entry name" value="Kunitz_huwentoxin"/>
    <property type="match status" value="1"/>
</dbReference>
<dbReference type="FunFam" id="4.10.410.10:FF:000020">
    <property type="entry name" value="Collagen, type VI, alpha 3"/>
    <property type="match status" value="1"/>
</dbReference>
<dbReference type="Gene3D" id="4.10.410.10">
    <property type="entry name" value="Pancreatic trypsin inhibitor Kunitz domain"/>
    <property type="match status" value="1"/>
</dbReference>
<dbReference type="InterPro" id="IPR002223">
    <property type="entry name" value="Kunitz_BPTI"/>
</dbReference>
<dbReference type="InterPro" id="IPR036880">
    <property type="entry name" value="Kunitz_BPTI_sf"/>
</dbReference>
<dbReference type="InterPro" id="IPR051388">
    <property type="entry name" value="Serpin_venom_toxin"/>
</dbReference>
<dbReference type="PANTHER" id="PTHR46751">
    <property type="entry name" value="EPPIN"/>
    <property type="match status" value="1"/>
</dbReference>
<dbReference type="PANTHER" id="PTHR46751:SF1">
    <property type="entry name" value="WAP FOUR-DISULFIDE CORE DOMAIN PROTEIN 6A"/>
    <property type="match status" value="1"/>
</dbReference>
<dbReference type="Pfam" id="PF00014">
    <property type="entry name" value="Kunitz_BPTI"/>
    <property type="match status" value="1"/>
</dbReference>
<dbReference type="PRINTS" id="PR00759">
    <property type="entry name" value="BASICPTASE"/>
</dbReference>
<dbReference type="SMART" id="SM00131">
    <property type="entry name" value="KU"/>
    <property type="match status" value="1"/>
</dbReference>
<dbReference type="SUPFAM" id="SSF57362">
    <property type="entry name" value="BPTI-like"/>
    <property type="match status" value="1"/>
</dbReference>
<dbReference type="PROSITE" id="PS50279">
    <property type="entry name" value="BPTI_KUNITZ_2"/>
    <property type="match status" value="1"/>
</dbReference>
<name>VKT22_CYRSC</name>
<accession>P0DJ80</accession>
<accession>A0A023WB32</accession>
<proteinExistence type="inferred from homology"/>
<reference key="1">
    <citation type="journal article" date="2008" name="PLoS ONE">
        <title>Discovery of a distinct superfamily of Kunitz-type toxin (KTT) from tarantulas.</title>
        <authorList>
            <person name="Yuan C.-H."/>
            <person name="He Q.-Y."/>
            <person name="Peng K."/>
            <person name="Diao J.-B."/>
            <person name="Jiang L.-P."/>
            <person name="Tang X."/>
            <person name="Liang S.-P."/>
        </authorList>
    </citation>
    <scope>NUCLEOTIDE SEQUENCE [MRNA]</scope>
    <source>
        <tissue>Venom gland</tissue>
    </source>
</reference>
<reference evidence="9" key="2">
    <citation type="journal article" date="2014" name="Peptides">
        <title>Molecular cloning, bioinformatics analysis and functional characterization of HWTX-XI toxin superfamily from the spider Ornithoctonus huwena.</title>
        <authorList>
            <person name="Jiang L."/>
            <person name="Deng M."/>
            <person name="Duan Z."/>
            <person name="Tang X."/>
            <person name="Liang S."/>
        </authorList>
    </citation>
    <scope>NUCLEOTIDE SEQUENCE [GENOMIC DNA]</scope>
</reference>
<feature type="signal peptide" evidence="3">
    <location>
        <begin position="1"/>
        <end position="27"/>
    </location>
</feature>
<feature type="propeptide" id="PRO_0000413834" evidence="1">
    <location>
        <begin position="28"/>
        <end position="33"/>
    </location>
</feature>
<feature type="chain" id="PRO_0000413835" description="Kunitz-type U15-theraphotoxin-Hs1a">
    <location>
        <begin position="34"/>
        <end position="88"/>
    </location>
</feature>
<feature type="domain" description="BPTI/Kunitz inhibitor" evidence="4">
    <location>
        <begin position="37"/>
        <end position="85"/>
    </location>
</feature>
<feature type="site" description="May bind Kv1" evidence="1">
    <location>
        <position position="39"/>
    </location>
</feature>
<feature type="site" description="Reactive bond for chymotrypsin" evidence="1">
    <location>
        <begin position="47"/>
        <end position="48"/>
    </location>
</feature>
<feature type="disulfide bond" evidence="4">
    <location>
        <begin position="37"/>
        <end position="85"/>
    </location>
</feature>
<feature type="disulfide bond" evidence="4">
    <location>
        <begin position="60"/>
        <end position="81"/>
    </location>
</feature>